<dbReference type="EMBL" id="AL592464">
    <property type="status" value="NOT_ANNOTATED_CDS"/>
    <property type="molecule type" value="Genomic_DNA"/>
</dbReference>
<dbReference type="EMBL" id="AL831784">
    <property type="status" value="NOT_ANNOTATED_CDS"/>
    <property type="molecule type" value="Genomic_DNA"/>
</dbReference>
<dbReference type="EMBL" id="DN831537">
    <property type="status" value="NOT_ANNOTATED_CDS"/>
    <property type="molecule type" value="mRNA"/>
</dbReference>
<dbReference type="EMBL" id="DN831538">
    <property type="status" value="NOT_ANNOTATED_CDS"/>
    <property type="molecule type" value="mRNA"/>
</dbReference>
<dbReference type="EMBL" id="DY655627">
    <property type="status" value="NOT_ANNOTATED_CDS"/>
    <property type="molecule type" value="mRNA"/>
</dbReference>
<dbReference type="RefSeq" id="NP_001229601.1">
    <property type="nucleotide sequence ID" value="NM_001242672.1"/>
</dbReference>
<dbReference type="RefSeq" id="XP_016855479.1">
    <property type="nucleotide sequence ID" value="XM_016999990.1"/>
</dbReference>
<dbReference type="SMR" id="A8MYJ7"/>
<dbReference type="BioGRID" id="939557">
    <property type="interactions" value="2"/>
</dbReference>
<dbReference type="FunCoup" id="A8MYJ7">
    <property type="interactions" value="11"/>
</dbReference>
<dbReference type="IntAct" id="A8MYJ7">
    <property type="interactions" value="1"/>
</dbReference>
<dbReference type="STRING" id="9606.ENSP00000490537"/>
<dbReference type="PhosphoSitePlus" id="A8MYJ7"/>
<dbReference type="BioMuta" id="TTC34"/>
<dbReference type="jPOST" id="A8MYJ7"/>
<dbReference type="MassIVE" id="A8MYJ7"/>
<dbReference type="PaxDb" id="9606-ENSP00000383873"/>
<dbReference type="PeptideAtlas" id="A8MYJ7"/>
<dbReference type="ProteomicsDB" id="2407"/>
<dbReference type="Antibodypedia" id="67410">
    <property type="antibodies" value="65 antibodies from 13 providers"/>
</dbReference>
<dbReference type="DNASU" id="100287898"/>
<dbReference type="Ensembl" id="ENST00000611612.2">
    <property type="protein sequence ID" value="ENSP00000483029.1"/>
    <property type="gene ID" value="ENSG00000275571.2"/>
</dbReference>
<dbReference type="Ensembl" id="ENST00000637179.1">
    <property type="protein sequence ID" value="ENSP00000490537.1"/>
    <property type="gene ID" value="ENSG00000215912.13"/>
</dbReference>
<dbReference type="GeneID" id="100287898"/>
<dbReference type="KEGG" id="hsa:100287898"/>
<dbReference type="UCSC" id="uc021oey.2">
    <property type="organism name" value="human"/>
</dbReference>
<dbReference type="AGR" id="HGNC:34297"/>
<dbReference type="CTD" id="100287898"/>
<dbReference type="DisGeNET" id="100287898"/>
<dbReference type="GeneCards" id="TTC34"/>
<dbReference type="HGNC" id="HGNC:34297">
    <property type="gene designation" value="TTC34"/>
</dbReference>
<dbReference type="HPA" id="ENSG00000215912">
    <property type="expression patterns" value="Tissue enhanced (testis)"/>
</dbReference>
<dbReference type="neXtProt" id="NX_A8MYJ7"/>
<dbReference type="OpenTargets" id="ENSG00000215912"/>
<dbReference type="PharmGKB" id="PA162407211"/>
<dbReference type="VEuPathDB" id="HostDB:ENSG00000215912"/>
<dbReference type="eggNOG" id="ENOG502QRDY">
    <property type="taxonomic scope" value="Eukaryota"/>
</dbReference>
<dbReference type="GeneTree" id="ENSGT00390000003047"/>
<dbReference type="HOGENOM" id="CLU_030342_0_0_1"/>
<dbReference type="InParanoid" id="A8MYJ7"/>
<dbReference type="OMA" id="HWDGMAV"/>
<dbReference type="PAN-GO" id="A8MYJ7">
    <property type="GO annotations" value="0 GO annotations based on evolutionary models"/>
</dbReference>
<dbReference type="PhylomeDB" id="A8MYJ7"/>
<dbReference type="TreeFam" id="TF332803"/>
<dbReference type="PathwayCommons" id="A8MYJ7"/>
<dbReference type="SignaLink" id="A8MYJ7"/>
<dbReference type="BioGRID-ORCS" id="100287898">
    <property type="hits" value="8 hits in 1139 CRISPR screens"/>
</dbReference>
<dbReference type="ChiTaRS" id="TTC34">
    <property type="organism name" value="human"/>
</dbReference>
<dbReference type="GenomeRNAi" id="100287898"/>
<dbReference type="Pharos" id="A8MYJ7">
    <property type="development level" value="Tdark"/>
</dbReference>
<dbReference type="PRO" id="PR:A8MYJ7"/>
<dbReference type="Proteomes" id="UP000005640">
    <property type="component" value="Chromosome 1"/>
</dbReference>
<dbReference type="RNAct" id="A8MYJ7">
    <property type="molecule type" value="protein"/>
</dbReference>
<dbReference type="Bgee" id="ENSG00000215912">
    <property type="expression patterns" value="Expressed in right uterine tube and 82 other cell types or tissues"/>
</dbReference>
<dbReference type="ExpressionAtlas" id="A8MYJ7">
    <property type="expression patterns" value="baseline and differential"/>
</dbReference>
<dbReference type="Gene3D" id="1.25.40.10">
    <property type="entry name" value="Tetratricopeptide repeat domain"/>
    <property type="match status" value="2"/>
</dbReference>
<dbReference type="InterPro" id="IPR011990">
    <property type="entry name" value="TPR-like_helical_dom_sf"/>
</dbReference>
<dbReference type="InterPro" id="IPR019734">
    <property type="entry name" value="TPR_rpt"/>
</dbReference>
<dbReference type="InterPro" id="IPR042161">
    <property type="entry name" value="TTC34"/>
</dbReference>
<dbReference type="PANTHER" id="PTHR44874">
    <property type="entry name" value="TETRATRICOPEPTIDE REPEAT PROTEIN 34"/>
    <property type="match status" value="1"/>
</dbReference>
<dbReference type="PANTHER" id="PTHR44874:SF1">
    <property type="entry name" value="TETRATRICOPEPTIDE REPEAT PROTEIN 34"/>
    <property type="match status" value="1"/>
</dbReference>
<dbReference type="Pfam" id="PF13432">
    <property type="entry name" value="TPR_16"/>
    <property type="match status" value="2"/>
</dbReference>
<dbReference type="Pfam" id="PF13181">
    <property type="entry name" value="TPR_8"/>
    <property type="match status" value="1"/>
</dbReference>
<dbReference type="SMART" id="SM00028">
    <property type="entry name" value="TPR"/>
    <property type="match status" value="7"/>
</dbReference>
<dbReference type="SUPFAM" id="SSF48452">
    <property type="entry name" value="TPR-like"/>
    <property type="match status" value="3"/>
</dbReference>
<dbReference type="PROSITE" id="PS50005">
    <property type="entry name" value="TPR"/>
    <property type="match status" value="6"/>
</dbReference>
<dbReference type="PROSITE" id="PS50293">
    <property type="entry name" value="TPR_REGION"/>
    <property type="match status" value="4"/>
</dbReference>
<name>TTC34_HUMAN</name>
<protein>
    <recommendedName>
        <fullName>Tetratricopeptide repeat protein 34</fullName>
        <shortName>TPR repeat protein 34</shortName>
    </recommendedName>
</protein>
<reference key="1">
    <citation type="journal article" date="2006" name="Nature">
        <title>The DNA sequence and biological annotation of human chromosome 1.</title>
        <authorList>
            <person name="Gregory S.G."/>
            <person name="Barlow K.F."/>
            <person name="McLay K.E."/>
            <person name="Kaul R."/>
            <person name="Swarbreck D."/>
            <person name="Dunham A."/>
            <person name="Scott C.E."/>
            <person name="Howe K.L."/>
            <person name="Woodfine K."/>
            <person name="Spencer C.C.A."/>
            <person name="Jones M.C."/>
            <person name="Gillson C."/>
            <person name="Searle S."/>
            <person name="Zhou Y."/>
            <person name="Kokocinski F."/>
            <person name="McDonald L."/>
            <person name="Evans R."/>
            <person name="Phillips K."/>
            <person name="Atkinson A."/>
            <person name="Cooper R."/>
            <person name="Jones C."/>
            <person name="Hall R.E."/>
            <person name="Andrews T.D."/>
            <person name="Lloyd C."/>
            <person name="Ainscough R."/>
            <person name="Almeida J.P."/>
            <person name="Ambrose K.D."/>
            <person name="Anderson F."/>
            <person name="Andrew R.W."/>
            <person name="Ashwell R.I.S."/>
            <person name="Aubin K."/>
            <person name="Babbage A.K."/>
            <person name="Bagguley C.L."/>
            <person name="Bailey J."/>
            <person name="Beasley H."/>
            <person name="Bethel G."/>
            <person name="Bird C.P."/>
            <person name="Bray-Allen S."/>
            <person name="Brown J.Y."/>
            <person name="Brown A.J."/>
            <person name="Buckley D."/>
            <person name="Burton J."/>
            <person name="Bye J."/>
            <person name="Carder C."/>
            <person name="Chapman J.C."/>
            <person name="Clark S.Y."/>
            <person name="Clarke G."/>
            <person name="Clee C."/>
            <person name="Cobley V."/>
            <person name="Collier R.E."/>
            <person name="Corby N."/>
            <person name="Coville G.J."/>
            <person name="Davies J."/>
            <person name="Deadman R."/>
            <person name="Dunn M."/>
            <person name="Earthrowl M."/>
            <person name="Ellington A.G."/>
            <person name="Errington H."/>
            <person name="Frankish A."/>
            <person name="Frankland J."/>
            <person name="French L."/>
            <person name="Garner P."/>
            <person name="Garnett J."/>
            <person name="Gay L."/>
            <person name="Ghori M.R.J."/>
            <person name="Gibson R."/>
            <person name="Gilby L.M."/>
            <person name="Gillett W."/>
            <person name="Glithero R.J."/>
            <person name="Grafham D.V."/>
            <person name="Griffiths C."/>
            <person name="Griffiths-Jones S."/>
            <person name="Grocock R."/>
            <person name="Hammond S."/>
            <person name="Harrison E.S.I."/>
            <person name="Hart E."/>
            <person name="Haugen E."/>
            <person name="Heath P.D."/>
            <person name="Holmes S."/>
            <person name="Holt K."/>
            <person name="Howden P.J."/>
            <person name="Hunt A.R."/>
            <person name="Hunt S.E."/>
            <person name="Hunter G."/>
            <person name="Isherwood J."/>
            <person name="James R."/>
            <person name="Johnson C."/>
            <person name="Johnson D."/>
            <person name="Joy A."/>
            <person name="Kay M."/>
            <person name="Kershaw J.K."/>
            <person name="Kibukawa M."/>
            <person name="Kimberley A.M."/>
            <person name="King A."/>
            <person name="Knights A.J."/>
            <person name="Lad H."/>
            <person name="Laird G."/>
            <person name="Lawlor S."/>
            <person name="Leongamornlert D.A."/>
            <person name="Lloyd D.M."/>
            <person name="Loveland J."/>
            <person name="Lovell J."/>
            <person name="Lush M.J."/>
            <person name="Lyne R."/>
            <person name="Martin S."/>
            <person name="Mashreghi-Mohammadi M."/>
            <person name="Matthews L."/>
            <person name="Matthews N.S.W."/>
            <person name="McLaren S."/>
            <person name="Milne S."/>
            <person name="Mistry S."/>
            <person name="Moore M.J.F."/>
            <person name="Nickerson T."/>
            <person name="O'Dell C.N."/>
            <person name="Oliver K."/>
            <person name="Palmeiri A."/>
            <person name="Palmer S.A."/>
            <person name="Parker A."/>
            <person name="Patel D."/>
            <person name="Pearce A.V."/>
            <person name="Peck A.I."/>
            <person name="Pelan S."/>
            <person name="Phelps K."/>
            <person name="Phillimore B.J."/>
            <person name="Plumb R."/>
            <person name="Rajan J."/>
            <person name="Raymond C."/>
            <person name="Rouse G."/>
            <person name="Saenphimmachak C."/>
            <person name="Sehra H.K."/>
            <person name="Sheridan E."/>
            <person name="Shownkeen R."/>
            <person name="Sims S."/>
            <person name="Skuce C.D."/>
            <person name="Smith M."/>
            <person name="Steward C."/>
            <person name="Subramanian S."/>
            <person name="Sycamore N."/>
            <person name="Tracey A."/>
            <person name="Tromans A."/>
            <person name="Van Helmond Z."/>
            <person name="Wall M."/>
            <person name="Wallis J.M."/>
            <person name="White S."/>
            <person name="Whitehead S.L."/>
            <person name="Wilkinson J.E."/>
            <person name="Willey D.L."/>
            <person name="Williams H."/>
            <person name="Wilming L."/>
            <person name="Wray P.W."/>
            <person name="Wu Z."/>
            <person name="Coulson A."/>
            <person name="Vaudin M."/>
            <person name="Sulston J.E."/>
            <person name="Durbin R.M."/>
            <person name="Hubbard T."/>
            <person name="Wooster R."/>
            <person name="Dunham I."/>
            <person name="Carter N.P."/>
            <person name="McVean G."/>
            <person name="Ross M.T."/>
            <person name="Harrow J."/>
            <person name="Olson M.V."/>
            <person name="Beck S."/>
            <person name="Rogers J."/>
            <person name="Bentley D.R."/>
        </authorList>
    </citation>
    <scope>NUCLEOTIDE SEQUENCE [LARGE SCALE GENOMIC DNA]</scope>
</reference>
<reference key="2">
    <citation type="submission" date="2006-10" db="EMBL/GenBank/DDBJ databases">
        <title>Exhaustive RT-PCR and sequencing of all novel TWINSCAN predictions in human.</title>
        <authorList>
            <person name="Stevens M."/>
            <person name="Wei C."/>
            <person name="Gross S.S."/>
            <person name="McPherson J."/>
            <person name="Brent M.R."/>
        </authorList>
    </citation>
    <scope>NUCLEOTIDE SEQUENCE [LARGE SCALE MRNA] OF 1-190</scope>
</reference>
<evidence type="ECO:0000256" key="1">
    <source>
        <dbReference type="SAM" id="MobiDB-lite"/>
    </source>
</evidence>
<gene>
    <name type="primary">TTC34</name>
</gene>
<feature type="chain" id="PRO_0000341278" description="Tetratricopeptide repeat protein 34">
    <location>
        <begin position="1"/>
        <end position="566"/>
    </location>
</feature>
<feature type="repeat" description="TPR 1">
    <location>
        <begin position="50"/>
        <end position="83"/>
    </location>
</feature>
<feature type="repeat" description="TPR 2">
    <location>
        <begin position="178"/>
        <end position="211"/>
    </location>
</feature>
<feature type="repeat" description="TPR 3">
    <location>
        <begin position="212"/>
        <end position="245"/>
    </location>
</feature>
<feature type="repeat" description="TPR 4">
    <location>
        <begin position="306"/>
        <end position="339"/>
    </location>
</feature>
<feature type="repeat" description="TPR 5">
    <location>
        <begin position="341"/>
        <end position="373"/>
    </location>
</feature>
<feature type="repeat" description="TPR 6">
    <location>
        <begin position="424"/>
        <end position="457"/>
    </location>
</feature>
<feature type="repeat" description="TPR 7">
    <location>
        <begin position="464"/>
        <end position="497"/>
    </location>
</feature>
<feature type="repeat" description="TPR 8">
    <location>
        <begin position="512"/>
        <end position="545"/>
    </location>
</feature>
<feature type="region of interest" description="Disordered" evidence="1">
    <location>
        <begin position="1"/>
        <end position="29"/>
    </location>
</feature>
<organism>
    <name type="scientific">Homo sapiens</name>
    <name type="common">Human</name>
    <dbReference type="NCBI Taxonomy" id="9606"/>
    <lineage>
        <taxon>Eukaryota</taxon>
        <taxon>Metazoa</taxon>
        <taxon>Chordata</taxon>
        <taxon>Craniata</taxon>
        <taxon>Vertebrata</taxon>
        <taxon>Euteleostomi</taxon>
        <taxon>Mammalia</taxon>
        <taxon>Eutheria</taxon>
        <taxon>Euarchontoglires</taxon>
        <taxon>Primates</taxon>
        <taxon>Haplorrhini</taxon>
        <taxon>Catarrhini</taxon>
        <taxon>Hominidae</taxon>
        <taxon>Homo</taxon>
    </lineage>
</organism>
<proteinExistence type="evidence at protein level"/>
<accession>A8MYJ7</accession>
<accession>A8MXL8</accession>
<keyword id="KW-1267">Proteomics identification</keyword>
<keyword id="KW-1185">Reference proteome</keyword>
<keyword id="KW-0677">Repeat</keyword>
<keyword id="KW-0802">TPR repeat</keyword>
<sequence>MLQRSPRAGPSRAQGRREAAETGGPTTQEGVACGVHQLATLLMELDSEDEASRLLAADALYRLGRLEETHKALLVALSRRPQAAPVLARLALLQLRRGFFYDANQLVKKLVQSGDTACLQPTLDVFCHEDRQLLQGHCHARALAILRARPGGADGRVHTKEAIAYLSLAIFAAGSQASESLLARARCYGFLGQKKTAMFDFNTVLRAEPGNVQALCGRALVHLALDQLQEAVDDIVSALKLGPGTVVPELRSLKPEAQALITQGLYSHCRALLSQLPDTGAPLEDKDTQGLLAVGEALIKIDSGQPHWHLLLADILMAQGSYEEAGTHLEKALHRAPTSEAARARLGLLQLKKGDVPGAARDLQSLAEVDAPDLSCLLHLLEASERQSLAQAAAQEAGTLLDAGQPRQALGYCSLSVLASGSSACHLRLRATCLAELQEFGRALRDLDHVLQEALGDGDLPRRAEDFCRQGRLLLSLGDEAAAAGAFAQALKLAPSLAQNSLCRQPGRAPTARMFLLRGQCCLEEQRHAEAWTAVESGLLVDPDHRGLKRLKARIRREASSGCWLQ</sequence>